<keyword id="KW-1015">Disulfide bond</keyword>
<keyword id="KW-0872">Ion channel impairing toxin</keyword>
<keyword id="KW-0528">Neurotoxin</keyword>
<keyword id="KW-0964">Secreted</keyword>
<keyword id="KW-0800">Toxin</keyword>
<feature type="propeptide" id="PRO_0000414938" evidence="3">
    <location>
        <begin position="1" status="less than"/>
        <end position="5"/>
    </location>
</feature>
<feature type="peptide" id="PRO_5000666522" description="Conotoxin Cal22c" evidence="3">
    <location>
        <begin position="7"/>
        <end position="53"/>
    </location>
</feature>
<feature type="non-terminal residue">
    <location>
        <position position="1"/>
    </location>
</feature>
<evidence type="ECO:0000303" key="1">
    <source>
    </source>
</evidence>
<evidence type="ECO:0000305" key="2"/>
<evidence type="ECO:0000305" key="3">
    <source>
    </source>
</evidence>
<reference key="1">
    <citation type="journal article" date="2011" name="Toxicon">
        <title>Diversity of conotoxin types from Conus californicus reflects a diversity of prey types and a novel evolutionary history.</title>
        <authorList>
            <person name="Elliger C.A."/>
            <person name="Richmond T.A."/>
            <person name="Lebaric Z.N."/>
            <person name="Pierce N.T."/>
            <person name="Sweedler J.V."/>
            <person name="Gilly W.F."/>
        </authorList>
    </citation>
    <scope>NUCLEOTIDE SEQUENCE [MRNA]</scope>
    <source>
        <tissue>Venom duct</tissue>
    </source>
</reference>
<comment type="function">
    <text evidence="2">Probable neurotoxin with unknown target. Possibly targets ion channels.</text>
</comment>
<comment type="subcellular location">
    <subcellularLocation>
        <location evidence="3">Secreted</location>
    </subcellularLocation>
</comment>
<comment type="tissue specificity">
    <text evidence="3">Expressed by the venom duct.</text>
</comment>
<comment type="domain">
    <text>The cysteine framework is XXII (C-C-C-C-C-C-C-C).</text>
</comment>
<comment type="PTM">
    <text evidence="2">Contains 4 disulfide bonds.</text>
</comment>
<name>CUMC_CONCL</name>
<proteinExistence type="evidence at transcript level"/>
<accession>D3JWK4</accession>
<dbReference type="EMBL" id="GU324076">
    <property type="protein sequence ID" value="ADB95948.1"/>
    <property type="molecule type" value="mRNA"/>
</dbReference>
<dbReference type="ConoServer" id="4051">
    <property type="toxin name" value="Cal22c precursor"/>
</dbReference>
<dbReference type="GO" id="GO:0005576">
    <property type="term" value="C:extracellular region"/>
    <property type="evidence" value="ECO:0007669"/>
    <property type="project" value="UniProtKB-SubCell"/>
</dbReference>
<dbReference type="GO" id="GO:0099106">
    <property type="term" value="F:ion channel regulator activity"/>
    <property type="evidence" value="ECO:0007669"/>
    <property type="project" value="UniProtKB-KW"/>
</dbReference>
<dbReference type="GO" id="GO:0090729">
    <property type="term" value="F:toxin activity"/>
    <property type="evidence" value="ECO:0007669"/>
    <property type="project" value="UniProtKB-KW"/>
</dbReference>
<organism>
    <name type="scientific">Californiconus californicus</name>
    <name type="common">California cone</name>
    <name type="synonym">Conus californicus</name>
    <dbReference type="NCBI Taxonomy" id="1736779"/>
    <lineage>
        <taxon>Eukaryota</taxon>
        <taxon>Metazoa</taxon>
        <taxon>Spiralia</taxon>
        <taxon>Lophotrochozoa</taxon>
        <taxon>Mollusca</taxon>
        <taxon>Gastropoda</taxon>
        <taxon>Caenogastropoda</taxon>
        <taxon>Neogastropoda</taxon>
        <taxon>Conoidea</taxon>
        <taxon>Conidae</taxon>
        <taxon>Californiconus</taxon>
    </lineage>
</organism>
<protein>
    <recommendedName>
        <fullName evidence="1">Conotoxin Cal22c</fullName>
    </recommendedName>
</protein>
<sequence>GRPSARYDAPYCSQEEVRECDDDCSGNPVRDACQCAYDPAGSPACDCFCVEPWRR</sequence>